<accession>Q9Z261</accession>
<accession>Q3TJX4</accession>
<gene>
    <name type="primary">Cldn7</name>
</gene>
<name>CLD7_MOUSE</name>
<organism>
    <name type="scientific">Mus musculus</name>
    <name type="common">Mouse</name>
    <dbReference type="NCBI Taxonomy" id="10090"/>
    <lineage>
        <taxon>Eukaryota</taxon>
        <taxon>Metazoa</taxon>
        <taxon>Chordata</taxon>
        <taxon>Craniata</taxon>
        <taxon>Vertebrata</taxon>
        <taxon>Euteleostomi</taxon>
        <taxon>Mammalia</taxon>
        <taxon>Eutheria</taxon>
        <taxon>Euarchontoglires</taxon>
        <taxon>Glires</taxon>
        <taxon>Rodentia</taxon>
        <taxon>Myomorpha</taxon>
        <taxon>Muroidea</taxon>
        <taxon>Muridae</taxon>
        <taxon>Murinae</taxon>
        <taxon>Mus</taxon>
        <taxon>Mus</taxon>
    </lineage>
</organism>
<proteinExistence type="evidence at protein level"/>
<reference key="1">
    <citation type="journal article" date="1999" name="Proc. Natl. Acad. Sci. U.S.A.">
        <title>Claudin multigene family encoding four-transmembrane domain protein components of tight junction strands.</title>
        <authorList>
            <person name="Morita K."/>
            <person name="Furuse M."/>
            <person name="Fujimoto K."/>
            <person name="Tsukita S."/>
        </authorList>
    </citation>
    <scope>NUCLEOTIDE SEQUENCE [MRNA]</scope>
    <scope>SUBCELLULAR LOCATION</scope>
    <scope>TISSUE SPECIFICITY</scope>
    <source>
        <tissue>Liver</tissue>
    </source>
</reference>
<reference key="2">
    <citation type="journal article" date="2005" name="Science">
        <title>The transcriptional landscape of the mammalian genome.</title>
        <authorList>
            <person name="Carninci P."/>
            <person name="Kasukawa T."/>
            <person name="Katayama S."/>
            <person name="Gough J."/>
            <person name="Frith M.C."/>
            <person name="Maeda N."/>
            <person name="Oyama R."/>
            <person name="Ravasi T."/>
            <person name="Lenhard B."/>
            <person name="Wells C."/>
            <person name="Kodzius R."/>
            <person name="Shimokawa K."/>
            <person name="Bajic V.B."/>
            <person name="Brenner S.E."/>
            <person name="Batalov S."/>
            <person name="Forrest A.R."/>
            <person name="Zavolan M."/>
            <person name="Davis M.J."/>
            <person name="Wilming L.G."/>
            <person name="Aidinis V."/>
            <person name="Allen J.E."/>
            <person name="Ambesi-Impiombato A."/>
            <person name="Apweiler R."/>
            <person name="Aturaliya R.N."/>
            <person name="Bailey T.L."/>
            <person name="Bansal M."/>
            <person name="Baxter L."/>
            <person name="Beisel K.W."/>
            <person name="Bersano T."/>
            <person name="Bono H."/>
            <person name="Chalk A.M."/>
            <person name="Chiu K.P."/>
            <person name="Choudhary V."/>
            <person name="Christoffels A."/>
            <person name="Clutterbuck D.R."/>
            <person name="Crowe M.L."/>
            <person name="Dalla E."/>
            <person name="Dalrymple B.P."/>
            <person name="de Bono B."/>
            <person name="Della Gatta G."/>
            <person name="di Bernardo D."/>
            <person name="Down T."/>
            <person name="Engstrom P."/>
            <person name="Fagiolini M."/>
            <person name="Faulkner G."/>
            <person name="Fletcher C.F."/>
            <person name="Fukushima T."/>
            <person name="Furuno M."/>
            <person name="Futaki S."/>
            <person name="Gariboldi M."/>
            <person name="Georgii-Hemming P."/>
            <person name="Gingeras T.R."/>
            <person name="Gojobori T."/>
            <person name="Green R.E."/>
            <person name="Gustincich S."/>
            <person name="Harbers M."/>
            <person name="Hayashi Y."/>
            <person name="Hensch T.K."/>
            <person name="Hirokawa N."/>
            <person name="Hill D."/>
            <person name="Huminiecki L."/>
            <person name="Iacono M."/>
            <person name="Ikeo K."/>
            <person name="Iwama A."/>
            <person name="Ishikawa T."/>
            <person name="Jakt M."/>
            <person name="Kanapin A."/>
            <person name="Katoh M."/>
            <person name="Kawasawa Y."/>
            <person name="Kelso J."/>
            <person name="Kitamura H."/>
            <person name="Kitano H."/>
            <person name="Kollias G."/>
            <person name="Krishnan S.P."/>
            <person name="Kruger A."/>
            <person name="Kummerfeld S.K."/>
            <person name="Kurochkin I.V."/>
            <person name="Lareau L.F."/>
            <person name="Lazarevic D."/>
            <person name="Lipovich L."/>
            <person name="Liu J."/>
            <person name="Liuni S."/>
            <person name="McWilliam S."/>
            <person name="Madan Babu M."/>
            <person name="Madera M."/>
            <person name="Marchionni L."/>
            <person name="Matsuda H."/>
            <person name="Matsuzawa S."/>
            <person name="Miki H."/>
            <person name="Mignone F."/>
            <person name="Miyake S."/>
            <person name="Morris K."/>
            <person name="Mottagui-Tabar S."/>
            <person name="Mulder N."/>
            <person name="Nakano N."/>
            <person name="Nakauchi H."/>
            <person name="Ng P."/>
            <person name="Nilsson R."/>
            <person name="Nishiguchi S."/>
            <person name="Nishikawa S."/>
            <person name="Nori F."/>
            <person name="Ohara O."/>
            <person name="Okazaki Y."/>
            <person name="Orlando V."/>
            <person name="Pang K.C."/>
            <person name="Pavan W.J."/>
            <person name="Pavesi G."/>
            <person name="Pesole G."/>
            <person name="Petrovsky N."/>
            <person name="Piazza S."/>
            <person name="Reed J."/>
            <person name="Reid J.F."/>
            <person name="Ring B.Z."/>
            <person name="Ringwald M."/>
            <person name="Rost B."/>
            <person name="Ruan Y."/>
            <person name="Salzberg S.L."/>
            <person name="Sandelin A."/>
            <person name="Schneider C."/>
            <person name="Schoenbach C."/>
            <person name="Sekiguchi K."/>
            <person name="Semple C.A."/>
            <person name="Seno S."/>
            <person name="Sessa L."/>
            <person name="Sheng Y."/>
            <person name="Shibata Y."/>
            <person name="Shimada H."/>
            <person name="Shimada K."/>
            <person name="Silva D."/>
            <person name="Sinclair B."/>
            <person name="Sperling S."/>
            <person name="Stupka E."/>
            <person name="Sugiura K."/>
            <person name="Sultana R."/>
            <person name="Takenaka Y."/>
            <person name="Taki K."/>
            <person name="Tammoja K."/>
            <person name="Tan S.L."/>
            <person name="Tang S."/>
            <person name="Taylor M.S."/>
            <person name="Tegner J."/>
            <person name="Teichmann S.A."/>
            <person name="Ueda H.R."/>
            <person name="van Nimwegen E."/>
            <person name="Verardo R."/>
            <person name="Wei C.L."/>
            <person name="Yagi K."/>
            <person name="Yamanishi H."/>
            <person name="Zabarovsky E."/>
            <person name="Zhu S."/>
            <person name="Zimmer A."/>
            <person name="Hide W."/>
            <person name="Bult C."/>
            <person name="Grimmond S.M."/>
            <person name="Teasdale R.D."/>
            <person name="Liu E.T."/>
            <person name="Brusic V."/>
            <person name="Quackenbush J."/>
            <person name="Wahlestedt C."/>
            <person name="Mattick J.S."/>
            <person name="Hume D.A."/>
            <person name="Kai C."/>
            <person name="Sasaki D."/>
            <person name="Tomaru Y."/>
            <person name="Fukuda S."/>
            <person name="Kanamori-Katayama M."/>
            <person name="Suzuki M."/>
            <person name="Aoki J."/>
            <person name="Arakawa T."/>
            <person name="Iida J."/>
            <person name="Imamura K."/>
            <person name="Itoh M."/>
            <person name="Kato T."/>
            <person name="Kawaji H."/>
            <person name="Kawagashira N."/>
            <person name="Kawashima T."/>
            <person name="Kojima M."/>
            <person name="Kondo S."/>
            <person name="Konno H."/>
            <person name="Nakano K."/>
            <person name="Ninomiya N."/>
            <person name="Nishio T."/>
            <person name="Okada M."/>
            <person name="Plessy C."/>
            <person name="Shibata K."/>
            <person name="Shiraki T."/>
            <person name="Suzuki S."/>
            <person name="Tagami M."/>
            <person name="Waki K."/>
            <person name="Watahiki A."/>
            <person name="Okamura-Oho Y."/>
            <person name="Suzuki H."/>
            <person name="Kawai J."/>
            <person name="Hayashizaki Y."/>
        </authorList>
    </citation>
    <scope>NUCLEOTIDE SEQUENCE [LARGE SCALE MRNA]</scope>
    <source>
        <strain>C57BL/6J</strain>
        <tissue>Kidney</tissue>
        <tissue>Lung</tissue>
    </source>
</reference>
<reference key="3">
    <citation type="journal article" date="2009" name="PLoS Biol.">
        <title>Lineage-specific biology revealed by a finished genome assembly of the mouse.</title>
        <authorList>
            <person name="Church D.M."/>
            <person name="Goodstadt L."/>
            <person name="Hillier L.W."/>
            <person name="Zody M.C."/>
            <person name="Goldstein S."/>
            <person name="She X."/>
            <person name="Bult C.J."/>
            <person name="Agarwala R."/>
            <person name="Cherry J.L."/>
            <person name="DiCuccio M."/>
            <person name="Hlavina W."/>
            <person name="Kapustin Y."/>
            <person name="Meric P."/>
            <person name="Maglott D."/>
            <person name="Birtle Z."/>
            <person name="Marques A.C."/>
            <person name="Graves T."/>
            <person name="Zhou S."/>
            <person name="Teague B."/>
            <person name="Potamousis K."/>
            <person name="Churas C."/>
            <person name="Place M."/>
            <person name="Herschleb J."/>
            <person name="Runnheim R."/>
            <person name="Forrest D."/>
            <person name="Amos-Landgraf J."/>
            <person name="Schwartz D.C."/>
            <person name="Cheng Z."/>
            <person name="Lindblad-Toh K."/>
            <person name="Eichler E.E."/>
            <person name="Ponting C.P."/>
        </authorList>
    </citation>
    <scope>NUCLEOTIDE SEQUENCE [LARGE SCALE GENOMIC DNA]</scope>
    <source>
        <strain>C57BL/6J</strain>
    </source>
</reference>
<reference key="4">
    <citation type="journal article" date="2004" name="Genome Res.">
        <title>The status, quality, and expansion of the NIH full-length cDNA project: the Mammalian Gene Collection (MGC).</title>
        <authorList>
            <consortium name="The MGC Project Team"/>
        </authorList>
    </citation>
    <scope>NUCLEOTIDE SEQUENCE [LARGE SCALE MRNA]</scope>
    <source>
        <strain>FVB/N</strain>
        <tissue>Colon</tissue>
        <tissue>Mammary gland</tissue>
    </source>
</reference>
<reference key="5">
    <citation type="journal article" date="1999" name="J. Cell Biol.">
        <title>Direct binding of three tight junction-associated MAGUKs, ZO-1, ZO-2, and ZO-3, with the COOH termini of claudins.</title>
        <authorList>
            <person name="Itoh M."/>
            <person name="Furuse M."/>
            <person name="Morita K."/>
            <person name="Kubota K."/>
            <person name="Saitou M."/>
            <person name="Tsukita S."/>
        </authorList>
    </citation>
    <scope>INTERACTION WITH TJP1; TJP2 AND TJP3</scope>
</reference>
<reference key="6">
    <citation type="journal article" date="2010" name="Cell">
        <title>A tissue-specific atlas of mouse protein phosphorylation and expression.</title>
        <authorList>
            <person name="Huttlin E.L."/>
            <person name="Jedrychowski M.P."/>
            <person name="Elias J.E."/>
            <person name="Goswami T."/>
            <person name="Rad R."/>
            <person name="Beausoleil S.A."/>
            <person name="Villen J."/>
            <person name="Haas W."/>
            <person name="Sowa M.E."/>
            <person name="Gygi S.P."/>
        </authorList>
    </citation>
    <scope>IDENTIFICATION BY MASS SPECTROMETRY [LARGE SCALE ANALYSIS]</scope>
    <source>
        <tissue>Kidney</tissue>
        <tissue>Lung</tissue>
        <tissue>Pancreas</tissue>
    </source>
</reference>
<sequence>MANSGLQLLGFSMAMLGWVGLIASTAIPQWQMSSYAGDNIITAQAMYKGLWMECVTQSTGMMSCKMYDSVLALPGALQATRALMVVSLVLGFLAMFVATMGMKCTRCGGDDKAKKARIAMTGGIVFIVAGLAALVACSWIGHQIVTDFYNPLTPMNVKYEFGPAIFIGWAGSALVLLGGALLSCSCPGSESKAAYRAPRSYPKSNSSKEYV</sequence>
<protein>
    <recommendedName>
        <fullName>Claudin-7</fullName>
    </recommendedName>
</protein>
<keyword id="KW-0965">Cell junction</keyword>
<keyword id="KW-1003">Cell membrane</keyword>
<keyword id="KW-0472">Membrane</keyword>
<keyword id="KW-0597">Phosphoprotein</keyword>
<keyword id="KW-1185">Reference proteome</keyword>
<keyword id="KW-0796">Tight junction</keyword>
<keyword id="KW-0812">Transmembrane</keyword>
<keyword id="KW-1133">Transmembrane helix</keyword>
<comment type="function">
    <text evidence="1">Plays a major role in tight junction-specific obliteration of the intercellular space, through calcium-independent cell-adhesion activity.</text>
</comment>
<comment type="subunit">
    <text evidence="2 4">Directly interacts with TJP1/ZO-1, TJP2/ZO-2 and TJP3/ZO-3 (PubMed:10601346). The phosphorylated form interacts with EPCAM (By similarity).</text>
</comment>
<comment type="subcellular location">
    <subcellularLocation>
        <location evidence="2">Cell membrane</location>
        <topology evidence="3">Multi-pass membrane protein</topology>
    </subcellularLocation>
    <subcellularLocation>
        <location evidence="2">Basolateral cell membrane</location>
    </subcellularLocation>
    <subcellularLocation>
        <location evidence="2">Cell junction</location>
        <location evidence="2">Tight junction</location>
    </subcellularLocation>
    <text evidence="2">Colocalizes with EPCAM at the basolateral cell membrane and tight junction.</text>
</comment>
<comment type="tissue specificity">
    <text evidence="5">Expressed predominantly in lung and kidney.</text>
</comment>
<comment type="PTM">
    <text evidence="1">Phosphorylated.</text>
</comment>
<comment type="similarity">
    <text evidence="6">Belongs to the claudin family.</text>
</comment>
<dbReference type="EMBL" id="AF087825">
    <property type="protein sequence ID" value="AAD09760.1"/>
    <property type="molecule type" value="mRNA"/>
</dbReference>
<dbReference type="EMBL" id="AK002924">
    <property type="protein sequence ID" value="BAB22460.1"/>
    <property type="molecule type" value="mRNA"/>
</dbReference>
<dbReference type="EMBL" id="AK087296">
    <property type="protein sequence ID" value="BAC39839.1"/>
    <property type="molecule type" value="mRNA"/>
</dbReference>
<dbReference type="EMBL" id="AK145504">
    <property type="protein sequence ID" value="BAE26475.1"/>
    <property type="molecule type" value="mRNA"/>
</dbReference>
<dbReference type="EMBL" id="AK167250">
    <property type="protein sequence ID" value="BAE39371.1"/>
    <property type="molecule type" value="mRNA"/>
</dbReference>
<dbReference type="EMBL" id="AL596185">
    <property type="status" value="NOT_ANNOTATED_CDS"/>
    <property type="molecule type" value="Genomic_DNA"/>
</dbReference>
<dbReference type="EMBL" id="BC008104">
    <property type="protein sequence ID" value="AAH08104.1"/>
    <property type="molecule type" value="mRNA"/>
</dbReference>
<dbReference type="EMBL" id="BC050007">
    <property type="protein sequence ID" value="AAH50007.1"/>
    <property type="molecule type" value="mRNA"/>
</dbReference>
<dbReference type="CCDS" id="CCDS24925.1"/>
<dbReference type="RefSeq" id="NP_001180548.1">
    <property type="nucleotide sequence ID" value="NM_001193619.1"/>
</dbReference>
<dbReference type="RefSeq" id="NP_058583.1">
    <property type="nucleotide sequence ID" value="NM_016887.6"/>
</dbReference>
<dbReference type="SMR" id="Q9Z261"/>
<dbReference type="FunCoup" id="Q9Z261">
    <property type="interactions" value="335"/>
</dbReference>
<dbReference type="IntAct" id="Q9Z261">
    <property type="interactions" value="1"/>
</dbReference>
<dbReference type="MINT" id="Q9Z261"/>
<dbReference type="STRING" id="10090.ENSMUSP00000018713"/>
<dbReference type="iPTMnet" id="Q9Z261"/>
<dbReference type="PhosphoSitePlus" id="Q9Z261"/>
<dbReference type="PaxDb" id="10090-ENSMUSP00000018713"/>
<dbReference type="ProteomicsDB" id="283295"/>
<dbReference type="Antibodypedia" id="4583">
    <property type="antibodies" value="514 antibodies from 37 providers"/>
</dbReference>
<dbReference type="DNASU" id="53624"/>
<dbReference type="Ensembl" id="ENSMUST00000018713.13">
    <property type="protein sequence ID" value="ENSMUSP00000018713.7"/>
    <property type="gene ID" value="ENSMUSG00000018569.13"/>
</dbReference>
<dbReference type="Ensembl" id="ENSMUST00000108597.8">
    <property type="protein sequence ID" value="ENSMUSP00000104238.2"/>
    <property type="gene ID" value="ENSMUSG00000018569.13"/>
</dbReference>
<dbReference type="GeneID" id="53624"/>
<dbReference type="KEGG" id="mmu:53624"/>
<dbReference type="UCSC" id="uc007jtb.2">
    <property type="organism name" value="mouse"/>
</dbReference>
<dbReference type="AGR" id="MGI:1859285"/>
<dbReference type="CTD" id="1366"/>
<dbReference type="MGI" id="MGI:1859285">
    <property type="gene designation" value="Cldn7"/>
</dbReference>
<dbReference type="VEuPathDB" id="HostDB:ENSMUSG00000018569"/>
<dbReference type="eggNOG" id="ENOG502QPXX">
    <property type="taxonomic scope" value="Eukaryota"/>
</dbReference>
<dbReference type="GeneTree" id="ENSGT00940000160672"/>
<dbReference type="HOGENOM" id="CLU_076370_1_2_1"/>
<dbReference type="InParanoid" id="Q9Z261"/>
<dbReference type="OMA" id="ACAWCTH"/>
<dbReference type="OrthoDB" id="10025519at2759"/>
<dbReference type="PhylomeDB" id="Q9Z261"/>
<dbReference type="TreeFam" id="TF331936"/>
<dbReference type="BioGRID-ORCS" id="53624">
    <property type="hits" value="1 hit in 78 CRISPR screens"/>
</dbReference>
<dbReference type="ChiTaRS" id="Cldn7">
    <property type="organism name" value="mouse"/>
</dbReference>
<dbReference type="PRO" id="PR:Q9Z261"/>
<dbReference type="Proteomes" id="UP000000589">
    <property type="component" value="Chromosome 11"/>
</dbReference>
<dbReference type="RNAct" id="Q9Z261">
    <property type="molecule type" value="protein"/>
</dbReference>
<dbReference type="Bgee" id="ENSMUSG00000018569">
    <property type="expression patterns" value="Expressed in crypt of Lieberkuhn of small intestine and 154 other cell types or tissues"/>
</dbReference>
<dbReference type="ExpressionAtlas" id="Q9Z261">
    <property type="expression patterns" value="baseline and differential"/>
</dbReference>
<dbReference type="GO" id="GO:0016327">
    <property type="term" value="C:apicolateral plasma membrane"/>
    <property type="evidence" value="ECO:0000314"/>
    <property type="project" value="UniProtKB"/>
</dbReference>
<dbReference type="GO" id="GO:0016323">
    <property type="term" value="C:basolateral plasma membrane"/>
    <property type="evidence" value="ECO:0000314"/>
    <property type="project" value="MGI"/>
</dbReference>
<dbReference type="GO" id="GO:0005923">
    <property type="term" value="C:bicellular tight junction"/>
    <property type="evidence" value="ECO:0000314"/>
    <property type="project" value="UniProtKB"/>
</dbReference>
<dbReference type="GO" id="GO:0016328">
    <property type="term" value="C:lateral plasma membrane"/>
    <property type="evidence" value="ECO:0000314"/>
    <property type="project" value="MGI"/>
</dbReference>
<dbReference type="GO" id="GO:0016020">
    <property type="term" value="C:membrane"/>
    <property type="evidence" value="ECO:0000303"/>
    <property type="project" value="UniProtKB"/>
</dbReference>
<dbReference type="GO" id="GO:0005886">
    <property type="term" value="C:plasma membrane"/>
    <property type="evidence" value="ECO:0000314"/>
    <property type="project" value="MGI"/>
</dbReference>
<dbReference type="GO" id="GO:0042802">
    <property type="term" value="F:identical protein binding"/>
    <property type="evidence" value="ECO:0000250"/>
    <property type="project" value="UniProtKB"/>
</dbReference>
<dbReference type="GO" id="GO:0005198">
    <property type="term" value="F:structural molecule activity"/>
    <property type="evidence" value="ECO:0007669"/>
    <property type="project" value="InterPro"/>
</dbReference>
<dbReference type="GO" id="GO:0016338">
    <property type="term" value="P:calcium-independent cell-cell adhesion via plasma membrane cell-adhesion molecules"/>
    <property type="evidence" value="ECO:0000250"/>
    <property type="project" value="UniProtKB"/>
</dbReference>
<dbReference type="FunFam" id="1.20.140.150:FF:000001">
    <property type="entry name" value="Claudin"/>
    <property type="match status" value="1"/>
</dbReference>
<dbReference type="Gene3D" id="1.20.140.150">
    <property type="match status" value="1"/>
</dbReference>
<dbReference type="InterPro" id="IPR006187">
    <property type="entry name" value="Claudin"/>
</dbReference>
<dbReference type="InterPro" id="IPR003552">
    <property type="entry name" value="Claudin7"/>
</dbReference>
<dbReference type="InterPro" id="IPR017974">
    <property type="entry name" value="Claudin_CS"/>
</dbReference>
<dbReference type="InterPro" id="IPR004031">
    <property type="entry name" value="PMP22/EMP/MP20/Claudin"/>
</dbReference>
<dbReference type="PANTHER" id="PTHR12002">
    <property type="entry name" value="CLAUDIN"/>
    <property type="match status" value="1"/>
</dbReference>
<dbReference type="Pfam" id="PF00822">
    <property type="entry name" value="PMP22_Claudin"/>
    <property type="match status" value="1"/>
</dbReference>
<dbReference type="PRINTS" id="PR01077">
    <property type="entry name" value="CLAUDIN"/>
</dbReference>
<dbReference type="PRINTS" id="PR01381">
    <property type="entry name" value="CLAUDIN7"/>
</dbReference>
<dbReference type="PROSITE" id="PS01346">
    <property type="entry name" value="CLAUDIN"/>
    <property type="match status" value="1"/>
</dbReference>
<feature type="chain" id="PRO_0000144751" description="Claudin-7">
    <location>
        <begin position="1"/>
        <end position="211"/>
    </location>
</feature>
<feature type="topological domain" description="Cytoplasmic" evidence="3">
    <location>
        <begin position="1"/>
        <end position="7"/>
    </location>
</feature>
<feature type="transmembrane region" description="Helical" evidence="3">
    <location>
        <begin position="8"/>
        <end position="28"/>
    </location>
</feature>
<feature type="topological domain" description="Extracellular" evidence="3">
    <location>
        <begin position="29"/>
        <end position="81"/>
    </location>
</feature>
<feature type="transmembrane region" description="Helical" evidence="3">
    <location>
        <begin position="82"/>
        <end position="102"/>
    </location>
</feature>
<feature type="topological domain" description="Cytoplasmic" evidence="3">
    <location>
        <begin position="103"/>
        <end position="119"/>
    </location>
</feature>
<feature type="transmembrane region" description="Helical" evidence="3">
    <location>
        <begin position="120"/>
        <end position="140"/>
    </location>
</feature>
<feature type="topological domain" description="Extracellular" evidence="3">
    <location>
        <begin position="141"/>
        <end position="160"/>
    </location>
</feature>
<feature type="transmembrane region" description="Helical" evidence="3">
    <location>
        <begin position="161"/>
        <end position="181"/>
    </location>
</feature>
<feature type="topological domain" description="Cytoplasmic" evidence="3">
    <location>
        <begin position="182"/>
        <end position="211"/>
    </location>
</feature>
<feature type="region of interest" description="Interactions with TJP1, TJP2 and TJP3" evidence="1">
    <location>
        <begin position="210"/>
        <end position="211"/>
    </location>
</feature>
<evidence type="ECO:0000250" key="1"/>
<evidence type="ECO:0000250" key="2">
    <source>
        <dbReference type="UniProtKB" id="O95471"/>
    </source>
</evidence>
<evidence type="ECO:0000255" key="3"/>
<evidence type="ECO:0000269" key="4">
    <source>
    </source>
</evidence>
<evidence type="ECO:0000269" key="5">
    <source>
    </source>
</evidence>
<evidence type="ECO:0000305" key="6"/>